<name>GP67_BPT7</name>
<feature type="chain" id="PRO_0000106511" description="Protein 6.7">
    <location>
        <begin position="1"/>
        <end position="88"/>
    </location>
</feature>
<feature type="region of interest" description="Disordered" evidence="1">
    <location>
        <begin position="1"/>
        <end position="88"/>
    </location>
</feature>
<feature type="compositionally biased region" description="Basic and acidic residues" evidence="1">
    <location>
        <begin position="54"/>
        <end position="63"/>
    </location>
</feature>
<organismHost>
    <name type="scientific">Escherichia coli</name>
    <dbReference type="NCBI Taxonomy" id="562"/>
</organismHost>
<organism>
    <name type="scientific">Escherichia phage T7</name>
    <name type="common">Bacteriophage T7</name>
    <dbReference type="NCBI Taxonomy" id="10760"/>
    <lineage>
        <taxon>Viruses</taxon>
        <taxon>Duplodnaviria</taxon>
        <taxon>Heunggongvirae</taxon>
        <taxon>Uroviricota</taxon>
        <taxon>Caudoviricetes</taxon>
        <taxon>Autographiviridae</taxon>
        <taxon>Studiervirinae</taxon>
        <taxon>Teseptimavirus</taxon>
        <taxon>Teseptimavirus T7</taxon>
    </lineage>
</organism>
<gene>
    <name type="ordered locus">6.7</name>
</gene>
<accession>P03801</accession>
<protein>
    <recommendedName>
        <fullName>Protein 6.7</fullName>
    </recommendedName>
    <alternativeName>
        <fullName>Gene product 6.7</fullName>
        <shortName>Gp6.7</shortName>
    </alternativeName>
</protein>
<evidence type="ECO:0000256" key="1">
    <source>
        <dbReference type="SAM" id="MobiDB-lite"/>
    </source>
</evidence>
<evidence type="ECO:0000269" key="2">
    <source>
    </source>
</evidence>
<proteinExistence type="evidence at protein level"/>
<comment type="function">
    <text evidence="2">Plays a role in virion morphogenesis, and is ejected from the infecting particle into the bacterial cell.</text>
</comment>
<comment type="subcellular location">
    <subcellularLocation>
        <location evidence="2">Virion</location>
    </subcellularLocation>
    <text>Present in the head of the virion.</text>
</comment>
<sequence length="88" mass="9338">MCFSPKIKTPKMDTNQIRAVEPAPLTQEVSSVEFGGSSDETDTEGTEVSGRKGLKVERDDSVAKSKASGNGSARMKSSIRKSAFGGKK</sequence>
<dbReference type="EMBL" id="V01146">
    <property type="protein sequence ID" value="CAA24421.1"/>
    <property type="molecule type" value="Genomic_DNA"/>
</dbReference>
<dbReference type="PIR" id="A04426">
    <property type="entry name" value="Q6BP77"/>
</dbReference>
<dbReference type="RefSeq" id="NP_041991.1">
    <property type="nucleotide sequence ID" value="NC_001604.1"/>
</dbReference>
<dbReference type="PDB" id="9JYY">
    <property type="method" value="EM"/>
    <property type="resolution" value="3.00 A"/>
    <property type="chains" value="A/B/C/D/E/F/a/b=1-88"/>
</dbReference>
<dbReference type="PDB" id="9JYZ">
    <property type="method" value="EM"/>
    <property type="resolution" value="2.70 A"/>
    <property type="chains" value="0/3/4/5/6/7/8/9/AA/AB/AC/AD=1-88"/>
</dbReference>
<dbReference type="PDB" id="9JZ0">
    <property type="method" value="EM"/>
    <property type="resolution" value="3.50 A"/>
    <property type="chains" value="2/3/4/5/6/7/8/9/AA/AB/AC/AD=1-88"/>
</dbReference>
<dbReference type="PDBsum" id="9JYY"/>
<dbReference type="PDBsum" id="9JYZ"/>
<dbReference type="PDBsum" id="9JZ0"/>
<dbReference type="EMDB" id="EMD-61909"/>
<dbReference type="EMDB" id="EMD-61910"/>
<dbReference type="EMDB" id="EMD-61911"/>
<dbReference type="SMR" id="P03801"/>
<dbReference type="KEGG" id="vg:1261039"/>
<dbReference type="OrthoDB" id="22390at10239"/>
<dbReference type="Proteomes" id="UP000000840">
    <property type="component" value="Genome"/>
</dbReference>
<dbReference type="GO" id="GO:0039620">
    <property type="term" value="C:T=7 icosahedral viral capsid"/>
    <property type="evidence" value="ECO:0000315"/>
    <property type="project" value="CACAO"/>
</dbReference>
<dbReference type="InterPro" id="IPR020134">
    <property type="entry name" value="Phage_T7-like_6.7"/>
</dbReference>
<dbReference type="Pfam" id="PF17570">
    <property type="entry name" value="T7-like_gp67"/>
    <property type="match status" value="1"/>
</dbReference>
<keyword id="KW-0002">3D-structure</keyword>
<keyword id="KW-1185">Reference proteome</keyword>
<keyword id="KW-0946">Virion</keyword>
<reference key="1">
    <citation type="journal article" date="1983" name="J. Mol. Biol.">
        <title>Complete nucleotide sequence of bacteriophage T7 DNA and the locations of T7 genetic elements.</title>
        <authorList>
            <person name="Dunn J.J."/>
            <person name="Studier F.W."/>
        </authorList>
    </citation>
    <scope>NUCLEOTIDE SEQUENCE [LARGE SCALE GENOMIC DNA]</scope>
</reference>
<reference key="2">
    <citation type="journal article" date="2005" name="Virology">
        <title>Changes in bacteriophage T7 virion structure at the initiation of infection.</title>
        <authorList>
            <person name="Kemp P."/>
            <person name="Garcia L.R."/>
            <person name="Molineux I.J."/>
        </authorList>
    </citation>
    <scope>FUNCTION</scope>
    <scope>SUBCELLULAR LOCATION</scope>
</reference>